<sequence>MRHYEIVFMVHPDQSEQVPGMIERYTAAITGAEGKIHRLEDWGRRQLAYPINKLHKAHYVLMNVEAPQEVIDELETTFRFNDAVIRSMVMRTKHAVTEASPMVKAKDERRERRDDFANETADDAEAGDSEE</sequence>
<comment type="function">
    <text evidence="1">Binds together with bS18 to 16S ribosomal RNA.</text>
</comment>
<comment type="similarity">
    <text evidence="1">Belongs to the bacterial ribosomal protein bS6 family.</text>
</comment>
<evidence type="ECO:0000255" key="1">
    <source>
        <dbReference type="HAMAP-Rule" id="MF_00360"/>
    </source>
</evidence>
<evidence type="ECO:0000256" key="2">
    <source>
        <dbReference type="SAM" id="MobiDB-lite"/>
    </source>
</evidence>
<evidence type="ECO:0000305" key="3"/>
<accession>Q328J9</accession>
<proteinExistence type="inferred from homology"/>
<protein>
    <recommendedName>
        <fullName evidence="1">Small ribosomal subunit protein bS6</fullName>
    </recommendedName>
    <alternativeName>
        <fullName evidence="3">30S ribosomal protein S6</fullName>
    </alternativeName>
</protein>
<dbReference type="EMBL" id="CP000034">
    <property type="protein sequence ID" value="ABB64256.1"/>
    <property type="molecule type" value="Genomic_DNA"/>
</dbReference>
<dbReference type="RefSeq" id="WP_001216676.1">
    <property type="nucleotide sequence ID" value="NC_007606.1"/>
</dbReference>
<dbReference type="RefSeq" id="YP_405747.1">
    <property type="nucleotide sequence ID" value="NC_007606.1"/>
</dbReference>
<dbReference type="SMR" id="Q328J9"/>
<dbReference type="STRING" id="300267.SDY_4369"/>
<dbReference type="EnsemblBacteria" id="ABB64256">
    <property type="protein sequence ID" value="ABB64256"/>
    <property type="gene ID" value="SDY_4369"/>
</dbReference>
<dbReference type="GeneID" id="93777623"/>
<dbReference type="KEGG" id="sdy:SDY_4369"/>
<dbReference type="PATRIC" id="fig|300267.13.peg.5158"/>
<dbReference type="HOGENOM" id="CLU_113441_6_1_6"/>
<dbReference type="Proteomes" id="UP000002716">
    <property type="component" value="Chromosome"/>
</dbReference>
<dbReference type="GO" id="GO:0022627">
    <property type="term" value="C:cytosolic small ribosomal subunit"/>
    <property type="evidence" value="ECO:0007669"/>
    <property type="project" value="TreeGrafter"/>
</dbReference>
<dbReference type="GO" id="GO:0070181">
    <property type="term" value="F:small ribosomal subunit rRNA binding"/>
    <property type="evidence" value="ECO:0007669"/>
    <property type="project" value="TreeGrafter"/>
</dbReference>
<dbReference type="GO" id="GO:0003735">
    <property type="term" value="F:structural constituent of ribosome"/>
    <property type="evidence" value="ECO:0007669"/>
    <property type="project" value="InterPro"/>
</dbReference>
<dbReference type="GO" id="GO:0006412">
    <property type="term" value="P:translation"/>
    <property type="evidence" value="ECO:0007669"/>
    <property type="project" value="UniProtKB-UniRule"/>
</dbReference>
<dbReference type="CDD" id="cd00473">
    <property type="entry name" value="bS6"/>
    <property type="match status" value="1"/>
</dbReference>
<dbReference type="FunFam" id="3.30.70.60:FF:000003">
    <property type="entry name" value="30S ribosomal protein S6"/>
    <property type="match status" value="1"/>
</dbReference>
<dbReference type="Gene3D" id="3.30.70.60">
    <property type="match status" value="1"/>
</dbReference>
<dbReference type="HAMAP" id="MF_00360">
    <property type="entry name" value="Ribosomal_bS6"/>
    <property type="match status" value="1"/>
</dbReference>
<dbReference type="InterPro" id="IPR000529">
    <property type="entry name" value="Ribosomal_bS6"/>
</dbReference>
<dbReference type="InterPro" id="IPR020815">
    <property type="entry name" value="Ribosomal_bS6_CS"/>
</dbReference>
<dbReference type="InterPro" id="IPR035980">
    <property type="entry name" value="Ribosomal_bS6_sf"/>
</dbReference>
<dbReference type="InterPro" id="IPR020814">
    <property type="entry name" value="Ribosomal_S6_plastid/chlpt"/>
</dbReference>
<dbReference type="InterPro" id="IPR014717">
    <property type="entry name" value="Transl_elong_EF1B/ribsomal_bS6"/>
</dbReference>
<dbReference type="NCBIfam" id="TIGR00166">
    <property type="entry name" value="S6"/>
    <property type="match status" value="1"/>
</dbReference>
<dbReference type="PANTHER" id="PTHR21011">
    <property type="entry name" value="MITOCHONDRIAL 28S RIBOSOMAL PROTEIN S6"/>
    <property type="match status" value="1"/>
</dbReference>
<dbReference type="PANTHER" id="PTHR21011:SF1">
    <property type="entry name" value="SMALL RIBOSOMAL SUBUNIT PROTEIN BS6M"/>
    <property type="match status" value="1"/>
</dbReference>
<dbReference type="Pfam" id="PF01250">
    <property type="entry name" value="Ribosomal_S6"/>
    <property type="match status" value="1"/>
</dbReference>
<dbReference type="SUPFAM" id="SSF54995">
    <property type="entry name" value="Ribosomal protein S6"/>
    <property type="match status" value="1"/>
</dbReference>
<dbReference type="PROSITE" id="PS01048">
    <property type="entry name" value="RIBOSOMAL_S6"/>
    <property type="match status" value="1"/>
</dbReference>
<feature type="chain" id="PRO_0000229577" description="Small ribosomal subunit protein bS6">
    <location>
        <begin position="1"/>
        <end position="131"/>
    </location>
</feature>
<feature type="region of interest" description="Disordered" evidence="2">
    <location>
        <begin position="98"/>
        <end position="131"/>
    </location>
</feature>
<feature type="compositionally biased region" description="Basic and acidic residues" evidence="2">
    <location>
        <begin position="104"/>
        <end position="116"/>
    </location>
</feature>
<feature type="compositionally biased region" description="Acidic residues" evidence="2">
    <location>
        <begin position="120"/>
        <end position="131"/>
    </location>
</feature>
<feature type="modified residue" description="N6-acetyllysine" evidence="1">
    <location>
        <position position="93"/>
    </location>
</feature>
<reference key="1">
    <citation type="journal article" date="2005" name="Nucleic Acids Res.">
        <title>Genome dynamics and diversity of Shigella species, the etiologic agents of bacillary dysentery.</title>
        <authorList>
            <person name="Yang F."/>
            <person name="Yang J."/>
            <person name="Zhang X."/>
            <person name="Chen L."/>
            <person name="Jiang Y."/>
            <person name="Yan Y."/>
            <person name="Tang X."/>
            <person name="Wang J."/>
            <person name="Xiong Z."/>
            <person name="Dong J."/>
            <person name="Xue Y."/>
            <person name="Zhu Y."/>
            <person name="Xu X."/>
            <person name="Sun L."/>
            <person name="Chen S."/>
            <person name="Nie H."/>
            <person name="Peng J."/>
            <person name="Xu J."/>
            <person name="Wang Y."/>
            <person name="Yuan Z."/>
            <person name="Wen Y."/>
            <person name="Yao Z."/>
            <person name="Shen Y."/>
            <person name="Qiang B."/>
            <person name="Hou Y."/>
            <person name="Yu J."/>
            <person name="Jin Q."/>
        </authorList>
    </citation>
    <scope>NUCLEOTIDE SEQUENCE [LARGE SCALE GENOMIC DNA]</scope>
    <source>
        <strain>Sd197</strain>
    </source>
</reference>
<gene>
    <name evidence="1" type="primary">rpsF</name>
    <name type="ordered locus">SDY_4369</name>
</gene>
<keyword id="KW-0007">Acetylation</keyword>
<keyword id="KW-1185">Reference proteome</keyword>
<keyword id="KW-0687">Ribonucleoprotein</keyword>
<keyword id="KW-0689">Ribosomal protein</keyword>
<keyword id="KW-0694">RNA-binding</keyword>
<keyword id="KW-0699">rRNA-binding</keyword>
<name>RS6_SHIDS</name>
<organism>
    <name type="scientific">Shigella dysenteriae serotype 1 (strain Sd197)</name>
    <dbReference type="NCBI Taxonomy" id="300267"/>
    <lineage>
        <taxon>Bacteria</taxon>
        <taxon>Pseudomonadati</taxon>
        <taxon>Pseudomonadota</taxon>
        <taxon>Gammaproteobacteria</taxon>
        <taxon>Enterobacterales</taxon>
        <taxon>Enterobacteriaceae</taxon>
        <taxon>Shigella</taxon>
    </lineage>
</organism>